<keyword id="KW-0002">3D-structure</keyword>
<keyword id="KW-0014">AIDS</keyword>
<keyword id="KW-0167">Capsid protein</keyword>
<keyword id="KW-1032">Host cell membrane</keyword>
<keyword id="KW-1035">Host cytoplasm</keyword>
<keyword id="KW-1039">Host endosome</keyword>
<keyword id="KW-1043">Host membrane</keyword>
<keyword id="KW-1048">Host nucleus</keyword>
<keyword id="KW-0945">Host-virus interaction</keyword>
<keyword id="KW-0449">Lipoprotein</keyword>
<keyword id="KW-0472">Membrane</keyword>
<keyword id="KW-0479">Metal-binding</keyword>
<keyword id="KW-0488">Methylation</keyword>
<keyword id="KW-0519">Myristate</keyword>
<keyword id="KW-0597">Phosphoprotein</keyword>
<keyword id="KW-0677">Repeat</keyword>
<keyword id="KW-0688">Ribosomal frameshifting</keyword>
<keyword id="KW-0694">RNA-binding</keyword>
<keyword id="KW-1198">Viral budding</keyword>
<keyword id="KW-1187">Viral budding via the host ESCRT complexes</keyword>
<keyword id="KW-0543">Viral nucleoprotein</keyword>
<keyword id="KW-1188">Viral release from host cell</keyword>
<keyword id="KW-0946">Virion</keyword>
<keyword id="KW-0862">Zinc</keyword>
<keyword id="KW-0863">Zinc-finger</keyword>
<gene>
    <name type="primary">gag</name>
</gene>
<comment type="function">
    <molecule>Gag polyprotein</molecule>
    <text evidence="5">Mediates, with Gag-Pol polyprotein, the essential events in virion assembly, including binding the plasma membrane, making the protein-protein interactions necessary to create spherical particles, recruiting the viral Env proteins, and packaging the genomic RNA via direct interactions with the RNA packaging sequence (Psi).</text>
</comment>
<comment type="function">
    <molecule>Matrix protein p17</molecule>
    <text evidence="1 6">Targets the polyprotein to the plasma membrane via a multipartite membrane-binding signal, that includes its myristoylated N-terminus (By similarity). Matrix protein is part of the pre-integration complex. Implicated in the release from host cell mediated by Vpu. Binds to RNA (By similarity).</text>
</comment>
<comment type="function">
    <molecule>Capsid protein p24</molecule>
    <text evidence="5 6">Forms the conical core that encapsulates the genomic RNA-nucleocapsid complex in the virion. Most core are conical, with only 7% tubular. The core is constituted by capsid protein hexamer subunits. The core is disassembled soon after virion entry (By similarity). The capsid promotes immune invasion by cloaking viral DNA from CGAS detection (By similarity). Host restriction factors such as TRIM5-alpha or TRIMCyp bind retroviral capsids and cause premature capsid disassembly, leading to blocks in reverse transcription. Capsid restriction by TRIM5 is one of the factors which restricts HIV-1 to the human species. Host PIN1 apparently facilitates the virion uncoating (By similarity). On the other hand, interactions with PDZD8 or CYPA stabilize the capsid (By similarity).</text>
</comment>
<comment type="function">
    <molecule>Nucleocapsid protein p7</molecule>
    <text evidence="5">Encapsulates and protects viral dimeric unspliced genomic RNA (gRNA). Binds these RNAs through its zinc fingers. Acts as a nucleic acid chaperone which is involved in rearangement of nucleic acid secondary structure during gRNA retrotranscription. Also facilitates template switch leading to recombination. As part of the polyprotein, participates in gRNA dimerization, packaging, tRNA incorporation and virion assembly.</text>
</comment>
<comment type="function">
    <molecule>p6-gag</molecule>
    <text evidence="6">Plays a role in budding of the assembled particle by interacting with the host class E VPS proteins TSG101 and PDCD6IP/AIP1.</text>
</comment>
<comment type="subunit">
    <molecule>Gag polyprotein</molecule>
    <text evidence="4 5">Homotrimer; further assembles as hexamers of trimers. Oligomerization possibly creates a central hole into which the cytoplasmic tail of the gp41 envelope protein may be inserted. Interacts with host TRIM22; this interaction seems to disrupt proper trafficking of Gag polyprotein and may interfere with budding. Interacts with host PDZD8. When ubiquitinated, interacts (via p6-gag domain) with host PACSIN2; this interaction allows PACSIN2 recruitment to viral assembly sites and its subsequent incorporation into virions. Interacts with MOV10 (By similarity).</text>
</comment>
<comment type="subunit">
    <molecule>Matrix protein p17</molecule>
    <text evidence="5 6">Homotrimer; further assembles as hexamers of trimers. Interacts with gp41 (via C-terminus). Interacts with host CALM1; this interaction induces a conformational change in the Matrix protein, triggering exposure of the myristate group. Interacts with host AP3D1; this interaction allows the polyprotein trafficking to multivesicular bodies during virus assembly. Part of the pre-integration complex (PIC) which is composed of viral genome, matrix protein, Vpr and integrase.</text>
</comment>
<comment type="subunit">
    <molecule>Capsid protein p24</molecule>
    <text evidence="5 6">Homodimer; the homodimer further multimerizes as homohexamers or homopentamers (By similarity). Interacts with host NUP98 (By similarity). Interacts with host PPIA/CYPA; this interaction stabilizes the capsid (By similarity). Interacts with host NUP153 (By similarity). Interacts with host PDZD8; this interaction stabilizes the capsid. Interacts with host TRIM5; this interaction destabilizes the capsid (By similarity). Interacts with host CPSF6 (By similarity). Interacts with host NONO; the interaction is weak (By similarity).</text>
</comment>
<comment type="subunit">
    <molecule>Nucleocapsid protein p7</molecule>
    <text evidence="6">Interacts with host NUP98.</text>
</comment>
<comment type="subunit">
    <molecule>p6-gag</molecule>
    <text evidence="3 6">Interacts with Vpr; this interaction allows Vpr incorporation into the virion. Interacts with host TSG101. p6-gag interacts with host PDCD6IP/AIP1.</text>
</comment>
<comment type="subcellular location">
    <molecule>Gag polyprotein</molecule>
    <subcellularLocation>
        <location evidence="6">Host cell membrane</location>
        <topology evidence="6">Lipid-anchor</topology>
    </subcellularLocation>
    <subcellularLocation>
        <location evidence="6">Host endosome</location>
        <location evidence="6">Host multivesicular body</location>
    </subcellularLocation>
    <text evidence="6">These locations are probably linked to virus assembly sites. The main location is the cell membrane, but under some circumstances, late endosomal compartments can serve as productive sites for virion assembly.</text>
</comment>
<comment type="subcellular location">
    <molecule>Matrix protein p17</molecule>
    <subcellularLocation>
        <location evidence="6">Virion membrane</location>
        <topology evidence="6">Lipid-anchor</topology>
    </subcellularLocation>
    <subcellularLocation>
        <location evidence="1">Host nucleus</location>
    </subcellularLocation>
    <subcellularLocation>
        <location evidence="1">Host cytoplasm</location>
    </subcellularLocation>
</comment>
<comment type="subcellular location">
    <molecule>Capsid protein p24</molecule>
    <subcellularLocation>
        <location evidence="6">Virion</location>
    </subcellularLocation>
</comment>
<comment type="subcellular location">
    <molecule>Nucleocapsid protein p7</molecule>
    <subcellularLocation>
        <location evidence="6">Virion</location>
    </subcellularLocation>
</comment>
<comment type="alternative products">
    <event type="ribosomal frameshifting"/>
    <isoform>
        <id>P12495-1</id>
        <name>Gag polyprotein</name>
        <sequence type="displayed"/>
    </isoform>
    <isoform>
        <id>P12499-1</id>
        <name>Gag-Pol polyprotein</name>
        <sequence type="external"/>
    </isoform>
    <text>Translation results in the formation of the Gag polyprotein most of the time. Ribosomal frameshifting at the gag-pol genes boundary occurs at low frequency and produces the Gag-Pol polyprotein. This strategy of translation probably allows the virus to modulate the quantity of each viral protein. Maintenance of a correct Gag to Gag-Pol ratio is essential for RNA dimerization and viral infectivity.</text>
</comment>
<comment type="domain">
    <text evidence="6">Late-budding domains (L domains) are short sequence motifs essential for viral particle budding. They recruit proteins of the host ESCRT machinery (Endosomal Sorting Complex Required for Transport) or ESCRT-associated proteins. p6-gag contains two L domains: a PTAP/PSAP motif, which interacts with the UEV domain of TSG101 and a LYPX(n)L motif which interacts with PDCD6IP/AIP1.</text>
</comment>
<comment type="PTM">
    <text evidence="6">Gag-Pol polyprotein: Specific enzymatic cleavages by the viral protease yield mature proteins.</text>
</comment>
<comment type="PTM">
    <molecule>Matrix protein p17</molecule>
    <text evidence="5">Tyrosine phosphorylated presumably in the virion by a host kinase. Phosphorylation is apparently not a major regulator of membrane association.</text>
</comment>
<comment type="PTM">
    <text evidence="6">Capsid protein p24 is phosphorylated possibly by host MAPK1; this phosphorylation is necessary for Pin1-mediated virion uncoating.</text>
</comment>
<comment type="PTM">
    <text evidence="2">Nucleocapsid protein p7 is methylated by host PRMT6, impairing its function by reducing RNA annealing and the initiation of reverse transcription.</text>
</comment>
<comment type="miscellaneous">
    <text>HIV-1 lineages are divided in three main groups, M (for Major), O (for Outlier), and N (for New, or Non-M, Non-O). The vast majority of strains found worldwide belong to the group M. Group O seems to be endemic to and largely confined to Cameroon and neighboring countries in West Central Africa, where these viruses represent a small minority of HIV-1 strains. The group N is represented by a limited number of isolates from Cameroonian persons. The group M is further subdivided in 9 clades or subtypes (A to D, F to H, J and K).</text>
</comment>
<comment type="miscellaneous">
    <molecule>Isoform Gag polyprotein</molecule>
    <text>Produced by conventional translation.</text>
</comment>
<comment type="similarity">
    <text evidence="10">Belongs to the primate lentivirus group gag polyprotein family.</text>
</comment>
<reference key="1">
    <citation type="submission" date="1989-07" db="EMBL/GenBank/DDBJ databases">
        <authorList>
            <person name="Theodore T."/>
            <person name="Buckler-White A.J."/>
        </authorList>
    </citation>
    <scope>NUCLEOTIDE SEQUENCE [GENOMIC RNA]</scope>
</reference>
<reference key="2">
    <citation type="journal article" date="2003" name="Biochim. Biophys. Acta">
        <title>Role of HIV-1 Gag domains in viral assembly.</title>
        <authorList>
            <person name="Scarlata S."/>
            <person name="Carter C."/>
        </authorList>
    </citation>
    <scope>REVIEW</scope>
</reference>
<organismHost>
    <name type="scientific">Homo sapiens</name>
    <name type="common">Human</name>
    <dbReference type="NCBI Taxonomy" id="9606"/>
</organismHost>
<organism>
    <name type="scientific">Human immunodeficiency virus type 1 group M subtype D (isolate Z2/CDC-Z34)</name>
    <name type="common">HIV-1</name>
    <dbReference type="NCBI Taxonomy" id="11683"/>
    <lineage>
        <taxon>Viruses</taxon>
        <taxon>Riboviria</taxon>
        <taxon>Pararnavirae</taxon>
        <taxon>Artverviricota</taxon>
        <taxon>Revtraviricetes</taxon>
        <taxon>Ortervirales</taxon>
        <taxon>Retroviridae</taxon>
        <taxon>Orthoretrovirinae</taxon>
        <taxon>Lentivirus</taxon>
        <taxon>Human immunodeficiency virus type 1</taxon>
    </lineage>
</organism>
<name>GAG_HV1Z2</name>
<protein>
    <recommendedName>
        <fullName>Gag polyprotein</fullName>
    </recommendedName>
    <alternativeName>
        <fullName>Pr55Gag</fullName>
    </alternativeName>
    <component>
        <recommendedName>
            <fullName>Matrix protein p17</fullName>
            <shortName>MA</shortName>
        </recommendedName>
    </component>
    <component>
        <recommendedName>
            <fullName>Capsid protein p24</fullName>
            <shortName>CA</shortName>
        </recommendedName>
    </component>
    <component>
        <recommendedName>
            <fullName evidence="6">Spacer peptide 1</fullName>
            <shortName>SP1</shortName>
        </recommendedName>
        <alternativeName>
            <fullName>p2</fullName>
        </alternativeName>
    </component>
    <component>
        <recommendedName>
            <fullName>Nucleocapsid protein p7</fullName>
            <shortName>NC</shortName>
        </recommendedName>
    </component>
    <component>
        <recommendedName>
            <fullName evidence="6">Spacer peptide 2</fullName>
            <shortName>SP2</shortName>
        </recommendedName>
        <alternativeName>
            <fullName>p1</fullName>
        </alternativeName>
    </component>
    <component>
        <recommendedName>
            <fullName>p6-gag</fullName>
        </recommendedName>
    </component>
</protein>
<evidence type="ECO:0000250" key="1"/>
<evidence type="ECO:0000250" key="2">
    <source>
        <dbReference type="UniProtKB" id="P03347"/>
    </source>
</evidence>
<evidence type="ECO:0000250" key="3">
    <source>
        <dbReference type="UniProtKB" id="P03348"/>
    </source>
</evidence>
<evidence type="ECO:0000250" key="4">
    <source>
        <dbReference type="UniProtKB" id="P03349"/>
    </source>
</evidence>
<evidence type="ECO:0000250" key="5">
    <source>
        <dbReference type="UniProtKB" id="P04591"/>
    </source>
</evidence>
<evidence type="ECO:0000250" key="6">
    <source>
        <dbReference type="UniProtKB" id="P12493"/>
    </source>
</evidence>
<evidence type="ECO:0000250" key="7">
    <source>
        <dbReference type="UniProtKB" id="P12497"/>
    </source>
</evidence>
<evidence type="ECO:0000255" key="8">
    <source>
        <dbReference type="PROSITE-ProRule" id="PRU00047"/>
    </source>
</evidence>
<evidence type="ECO:0000256" key="9">
    <source>
        <dbReference type="SAM" id="MobiDB-lite"/>
    </source>
</evidence>
<evidence type="ECO:0000305" key="10"/>
<evidence type="ECO:0007829" key="11">
    <source>
        <dbReference type="PDB" id="1SJE"/>
    </source>
</evidence>
<dbReference type="EMBL" id="M22639">
    <property type="protein sequence ID" value="AAA45365.1"/>
    <property type="molecule type" value="Genomic_RNA"/>
</dbReference>
<dbReference type="PIR" id="S54377">
    <property type="entry name" value="S54377"/>
</dbReference>
<dbReference type="PDB" id="1SJE">
    <property type="method" value="X-ray"/>
    <property type="resolution" value="2.45 A"/>
    <property type="chains" value="C=167-182"/>
</dbReference>
<dbReference type="PDB" id="1SJH">
    <property type="method" value="X-ray"/>
    <property type="resolution" value="2.25 A"/>
    <property type="chains" value="C=167-179"/>
</dbReference>
<dbReference type="PDB" id="3D3T">
    <property type="method" value="X-ray"/>
    <property type="resolution" value="2.80 A"/>
    <property type="chains" value="P=446-455"/>
</dbReference>
<dbReference type="PDBsum" id="1SJE"/>
<dbReference type="PDBsum" id="1SJH"/>
<dbReference type="PDBsum" id="3D3T"/>
<dbReference type="SMR" id="P12495"/>
<dbReference type="EvolutionaryTrace" id="P12495"/>
<dbReference type="PRO" id="PR:P12495"/>
<dbReference type="Proteomes" id="UP000155099">
    <property type="component" value="Genome"/>
</dbReference>
<dbReference type="GO" id="GO:0042025">
    <property type="term" value="C:host cell nucleus"/>
    <property type="evidence" value="ECO:0007669"/>
    <property type="project" value="UniProtKB-SubCell"/>
</dbReference>
<dbReference type="GO" id="GO:0020002">
    <property type="term" value="C:host cell plasma membrane"/>
    <property type="evidence" value="ECO:0007669"/>
    <property type="project" value="UniProtKB-SubCell"/>
</dbReference>
<dbReference type="GO" id="GO:0072494">
    <property type="term" value="C:host multivesicular body"/>
    <property type="evidence" value="ECO:0007669"/>
    <property type="project" value="UniProtKB-SubCell"/>
</dbReference>
<dbReference type="GO" id="GO:0016020">
    <property type="term" value="C:membrane"/>
    <property type="evidence" value="ECO:0007669"/>
    <property type="project" value="UniProtKB-KW"/>
</dbReference>
<dbReference type="GO" id="GO:0019013">
    <property type="term" value="C:viral nucleocapsid"/>
    <property type="evidence" value="ECO:0007669"/>
    <property type="project" value="UniProtKB-KW"/>
</dbReference>
<dbReference type="GO" id="GO:0055036">
    <property type="term" value="C:virion membrane"/>
    <property type="evidence" value="ECO:0007669"/>
    <property type="project" value="UniProtKB-SubCell"/>
</dbReference>
<dbReference type="GO" id="GO:0003723">
    <property type="term" value="F:RNA binding"/>
    <property type="evidence" value="ECO:0007669"/>
    <property type="project" value="UniProtKB-KW"/>
</dbReference>
<dbReference type="GO" id="GO:0005198">
    <property type="term" value="F:structural molecule activity"/>
    <property type="evidence" value="ECO:0007669"/>
    <property type="project" value="InterPro"/>
</dbReference>
<dbReference type="GO" id="GO:0008270">
    <property type="term" value="F:zinc ion binding"/>
    <property type="evidence" value="ECO:0007669"/>
    <property type="project" value="UniProtKB-KW"/>
</dbReference>
<dbReference type="GO" id="GO:0039702">
    <property type="term" value="P:viral budding via host ESCRT complex"/>
    <property type="evidence" value="ECO:0007669"/>
    <property type="project" value="UniProtKB-KW"/>
</dbReference>
<dbReference type="GO" id="GO:0075523">
    <property type="term" value="P:viral translational frameshifting"/>
    <property type="evidence" value="ECO:0007669"/>
    <property type="project" value="UniProtKB-KW"/>
</dbReference>
<dbReference type="FunFam" id="1.10.1200.30:FF:000001">
    <property type="entry name" value="Gag polyprotein"/>
    <property type="match status" value="1"/>
</dbReference>
<dbReference type="FunFam" id="1.10.375.10:FF:000001">
    <property type="entry name" value="Gag polyprotein"/>
    <property type="match status" value="1"/>
</dbReference>
<dbReference type="FunFam" id="4.10.60.10:FF:000001">
    <property type="entry name" value="Gag polyprotein"/>
    <property type="match status" value="1"/>
</dbReference>
<dbReference type="Gene3D" id="1.10.1200.30">
    <property type="match status" value="1"/>
</dbReference>
<dbReference type="Gene3D" id="6.10.250.390">
    <property type="match status" value="1"/>
</dbReference>
<dbReference type="Gene3D" id="1.10.375.10">
    <property type="entry name" value="Human Immunodeficiency Virus Type 1 Capsid Protein"/>
    <property type="match status" value="1"/>
</dbReference>
<dbReference type="Gene3D" id="1.10.150.90">
    <property type="entry name" value="Immunodeficiency lentiviruses, gag gene matrix protein p17"/>
    <property type="match status" value="1"/>
</dbReference>
<dbReference type="Gene3D" id="1.20.5.760">
    <property type="entry name" value="Single helix bin"/>
    <property type="match status" value="1"/>
</dbReference>
<dbReference type="Gene3D" id="4.10.60.10">
    <property type="entry name" value="Zinc finger, CCHC-type"/>
    <property type="match status" value="1"/>
</dbReference>
<dbReference type="InterPro" id="IPR045345">
    <property type="entry name" value="Gag_p24_C"/>
</dbReference>
<dbReference type="InterPro" id="IPR014817">
    <property type="entry name" value="Gag_p6"/>
</dbReference>
<dbReference type="InterPro" id="IPR000071">
    <property type="entry name" value="Lentvrl_matrix_N"/>
</dbReference>
<dbReference type="InterPro" id="IPR012344">
    <property type="entry name" value="Matrix_HIV/RSV_N"/>
</dbReference>
<dbReference type="InterPro" id="IPR050195">
    <property type="entry name" value="Primate_lentivir_Gag_pol-like"/>
</dbReference>
<dbReference type="InterPro" id="IPR008916">
    <property type="entry name" value="Retrov_capsid_C"/>
</dbReference>
<dbReference type="InterPro" id="IPR008919">
    <property type="entry name" value="Retrov_capsid_N"/>
</dbReference>
<dbReference type="InterPro" id="IPR010999">
    <property type="entry name" value="Retrovr_matrix"/>
</dbReference>
<dbReference type="InterPro" id="IPR001878">
    <property type="entry name" value="Znf_CCHC"/>
</dbReference>
<dbReference type="InterPro" id="IPR036875">
    <property type="entry name" value="Znf_CCHC_sf"/>
</dbReference>
<dbReference type="PANTHER" id="PTHR40389:SF4">
    <property type="match status" value="1"/>
</dbReference>
<dbReference type="PANTHER" id="PTHR40389">
    <property type="entry name" value="ENDOGENOUS RETROVIRUS GROUP K MEMBER 24 GAG POLYPROTEIN-RELATED"/>
    <property type="match status" value="1"/>
</dbReference>
<dbReference type="Pfam" id="PF00540">
    <property type="entry name" value="Gag_p17"/>
    <property type="match status" value="1"/>
</dbReference>
<dbReference type="Pfam" id="PF19317">
    <property type="entry name" value="Gag_p24_C"/>
    <property type="match status" value="1"/>
</dbReference>
<dbReference type="Pfam" id="PF08705">
    <property type="entry name" value="Gag_p6"/>
    <property type="match status" value="1"/>
</dbReference>
<dbReference type="Pfam" id="PF00098">
    <property type="entry name" value="zf-CCHC"/>
    <property type="match status" value="2"/>
</dbReference>
<dbReference type="PRINTS" id="PR00234">
    <property type="entry name" value="HIV1MATRIX"/>
</dbReference>
<dbReference type="SMART" id="SM00343">
    <property type="entry name" value="ZnF_C2HC"/>
    <property type="match status" value="2"/>
</dbReference>
<dbReference type="SUPFAM" id="SSF47836">
    <property type="entry name" value="Retroviral matrix proteins"/>
    <property type="match status" value="1"/>
</dbReference>
<dbReference type="SUPFAM" id="SSF47353">
    <property type="entry name" value="Retrovirus capsid dimerization domain-like"/>
    <property type="match status" value="1"/>
</dbReference>
<dbReference type="SUPFAM" id="SSF47943">
    <property type="entry name" value="Retrovirus capsid protein, N-terminal core domain"/>
    <property type="match status" value="1"/>
</dbReference>
<dbReference type="SUPFAM" id="SSF57756">
    <property type="entry name" value="Retrovirus zinc finger-like domains"/>
    <property type="match status" value="1"/>
</dbReference>
<dbReference type="PROSITE" id="PS50158">
    <property type="entry name" value="ZF_CCHC"/>
    <property type="match status" value="2"/>
</dbReference>
<accession>P12495</accession>
<feature type="initiator methionine" description="Removed; by host" evidence="1">
    <location>
        <position position="1"/>
    </location>
</feature>
<feature type="chain" id="PRO_0000261239" description="Gag polyprotein">
    <location>
        <begin position="2"/>
        <end position="501"/>
    </location>
</feature>
<feature type="chain" id="PRO_0000038499" description="Matrix protein p17" evidence="1">
    <location>
        <begin position="2"/>
        <end position="133"/>
    </location>
</feature>
<feature type="chain" id="PRO_0000038500" description="Capsid protein p24" evidence="1">
    <location>
        <begin position="134"/>
        <end position="364"/>
    </location>
</feature>
<feature type="peptide" id="PRO_0000038501" description="Spacer peptide 1" evidence="1">
    <location>
        <begin position="365"/>
        <end position="379"/>
    </location>
</feature>
<feature type="chain" id="PRO_0000038502" description="Nucleocapsid protein p7" evidence="1">
    <location>
        <begin position="380"/>
        <end position="434"/>
    </location>
</feature>
<feature type="peptide" id="PRO_0000038503" description="Spacer peptide 2" evidence="1">
    <location>
        <begin position="435"/>
        <end position="450"/>
    </location>
</feature>
<feature type="chain" id="PRO_0000038504" description="p6-gag" evidence="1">
    <location>
        <begin position="451"/>
        <end position="501"/>
    </location>
</feature>
<feature type="zinc finger region" description="CCHC-type 1" evidence="8">
    <location>
        <begin position="392"/>
        <end position="409"/>
    </location>
</feature>
<feature type="zinc finger region" description="CCHC-type 2" evidence="8">
    <location>
        <begin position="413"/>
        <end position="430"/>
    </location>
</feature>
<feature type="region of interest" description="Interaction with Gp41" evidence="6">
    <location>
        <begin position="7"/>
        <end position="31"/>
    </location>
</feature>
<feature type="region of interest" description="Interaction with host CALM1" evidence="5">
    <location>
        <begin position="8"/>
        <end position="43"/>
    </location>
</feature>
<feature type="region of interest" description="Interaction with host AP3D1" evidence="7">
    <location>
        <begin position="12"/>
        <end position="19"/>
    </location>
</feature>
<feature type="region of interest" description="Interaction with membrane phosphatidylinositol 4,5-bisphosphate and RNA" evidence="6">
    <location>
        <begin position="14"/>
        <end position="33"/>
    </location>
</feature>
<feature type="region of interest" description="Interaction with membrane phosphatidylinositol 4,5-bisphosphate" evidence="6">
    <location>
        <begin position="73"/>
        <end position="77"/>
    </location>
</feature>
<feature type="region of interest" description="Disordered" evidence="9">
    <location>
        <begin position="102"/>
        <end position="129"/>
    </location>
</feature>
<feature type="region of interest" description="Interaction with host PPIA/CYPA and NUP153" evidence="6">
    <location>
        <begin position="190"/>
        <end position="228"/>
    </location>
</feature>
<feature type="region of interest" description="PPIA/CYPA-binding loop" evidence="5">
    <location>
        <begin position="218"/>
        <end position="226"/>
    </location>
</feature>
<feature type="region of interest" description="Dimerization/Multimerization of capsid protein p24" evidence="5">
    <location>
        <begin position="278"/>
        <end position="364"/>
    </location>
</feature>
<feature type="region of interest" description="Disordered" evidence="9">
    <location>
        <begin position="440"/>
        <end position="501"/>
    </location>
</feature>
<feature type="short sequence motif" description="Nuclear export signal" evidence="1">
    <location>
        <begin position="16"/>
        <end position="22"/>
    </location>
</feature>
<feature type="short sequence motif" description="Nuclear localization signal" evidence="1">
    <location>
        <begin position="26"/>
        <end position="32"/>
    </location>
</feature>
<feature type="short sequence motif" description="PTAP/PSAP motif">
    <location>
        <begin position="457"/>
        <end position="460"/>
    </location>
</feature>
<feature type="short sequence motif" description="LYPX(n)L motif">
    <location>
        <begin position="484"/>
        <end position="493"/>
    </location>
</feature>
<feature type="compositionally biased region" description="Low complexity" evidence="9">
    <location>
        <begin position="116"/>
        <end position="128"/>
    </location>
</feature>
<feature type="site" description="Cleavage; by viral protease" evidence="1">
    <location>
        <begin position="133"/>
        <end position="134"/>
    </location>
</feature>
<feature type="site" description="Cleavage; by viral protease" evidence="1">
    <location>
        <begin position="364"/>
        <end position="365"/>
    </location>
</feature>
<feature type="site" description="Cleavage; by viral protease" evidence="1">
    <location>
        <begin position="379"/>
        <end position="380"/>
    </location>
</feature>
<feature type="site" description="Cleavage; by viral protease" evidence="1">
    <location>
        <begin position="434"/>
        <end position="435"/>
    </location>
</feature>
<feature type="site" description="Cleavage; by viral protease" evidence="1">
    <location>
        <begin position="450"/>
        <end position="451"/>
    </location>
</feature>
<feature type="modified residue" description="Phosphoserine; by host MAPK1" evidence="6">
    <location>
        <position position="149"/>
    </location>
</feature>
<feature type="modified residue" description="Asymmetric dimethylarginine; in Nucleocapsid protein p7; by host PRMT6" evidence="1">
    <location>
        <position position="389"/>
    </location>
</feature>
<feature type="modified residue" description="Asymmetric dimethylarginine; in Nucleocapsid protein p7; by host PRMT6" evidence="1">
    <location>
        <position position="411"/>
    </location>
</feature>
<feature type="lipid moiety-binding region" description="N-myristoyl glycine; by host" evidence="1">
    <location>
        <position position="2"/>
    </location>
</feature>
<feature type="turn" evidence="11">
    <location>
        <begin position="178"/>
        <end position="180"/>
    </location>
</feature>
<sequence>MGARASVLSGGKLDAWEKIRLRPGGKKKYRLKHLVWASRELERFALNPGLLETSDGCKQIIGQLQPAIRTGSEELRSLFNTVATLYCVHERIEVKDTKEALEKMEEEQNKSKNKKAQQAAADAGNNSQVSQNYPIVQNLQGQMVHQAISPRTLNAWVKVIEEKAFSPEVIPMFSALSEGATPQDLNTMLNTVGGHQAAMQMLKETINEEAAEWDRLHPVHAGPIAPGQMREPRGSDIAGTTSTLQEQIAWMTSNPPIPVGEIYKRWIILGLNKIVRMYSPVSILDIRQGPKEPFRDYVDRFYKTLRAEQASQEVKGWMTETLLVQNANPDCKTILKALGPQATLEEMMTACQGVGGPSHKARVLAEAMSQATNSAAAVMMQRGNFKGPRKTIKCFNCGKEGHIAKNCRAPRRKGCWKCGKEGHQLKDCTERQANFLGKIWPSHKGRPGNFLQSRPEPTAPPAESFGFGEEITPSQKQEQKDKELYPSTALKSLFGNDPLLQ</sequence>
<proteinExistence type="evidence at protein level"/>